<reference key="1">
    <citation type="journal article" date="1995" name="Science">
        <title>Whole-genome random sequencing and assembly of Haemophilus influenzae Rd.</title>
        <authorList>
            <person name="Fleischmann R.D."/>
            <person name="Adams M.D."/>
            <person name="White O."/>
            <person name="Clayton R.A."/>
            <person name="Kirkness E.F."/>
            <person name="Kerlavage A.R."/>
            <person name="Bult C.J."/>
            <person name="Tomb J.-F."/>
            <person name="Dougherty B.A."/>
            <person name="Merrick J.M."/>
            <person name="McKenney K."/>
            <person name="Sutton G.G."/>
            <person name="FitzHugh W."/>
            <person name="Fields C.A."/>
            <person name="Gocayne J.D."/>
            <person name="Scott J.D."/>
            <person name="Shirley R."/>
            <person name="Liu L.-I."/>
            <person name="Glodek A."/>
            <person name="Kelley J.M."/>
            <person name="Weidman J.F."/>
            <person name="Phillips C.A."/>
            <person name="Spriggs T."/>
            <person name="Hedblom E."/>
            <person name="Cotton M.D."/>
            <person name="Utterback T.R."/>
            <person name="Hanna M.C."/>
            <person name="Nguyen D.T."/>
            <person name="Saudek D.M."/>
            <person name="Brandon R.C."/>
            <person name="Fine L.D."/>
            <person name="Fritchman J.L."/>
            <person name="Fuhrmann J.L."/>
            <person name="Geoghagen N.S.M."/>
            <person name="Gnehm C.L."/>
            <person name="McDonald L.A."/>
            <person name="Small K.V."/>
            <person name="Fraser C.M."/>
            <person name="Smith H.O."/>
            <person name="Venter J.C."/>
        </authorList>
    </citation>
    <scope>NUCLEOTIDE SEQUENCE [LARGE SCALE GENOMIC DNA]</scope>
    <source>
        <strain>ATCC 51907 / DSM 11121 / KW20 / Rd</strain>
    </source>
</reference>
<reference key="2">
    <citation type="journal article" date="2004" name="Acta Crystallogr. D">
        <title>Structure of DsbC from Haemophilus influenzae.</title>
        <authorList>
            <person name="Zhang M."/>
            <person name="Monzingo A.F."/>
            <person name="Segatori L."/>
            <person name="Georgiou G."/>
            <person name="Robertus J.D."/>
        </authorList>
    </citation>
    <scope>X-RAY CRYSTALLOGRAPHY (2.5 ANGSTROMS) OF 19-229</scope>
    <scope>SUBUNIT</scope>
    <scope>DISULFIDE BOND</scope>
</reference>
<name>DSBC_HAEIN</name>
<proteinExistence type="evidence at protein level"/>
<dbReference type="EMBL" id="L42023">
    <property type="protein sequence ID" value="AAC22866.1"/>
    <property type="molecule type" value="Genomic_DNA"/>
</dbReference>
<dbReference type="PIR" id="E64110">
    <property type="entry name" value="E64110"/>
</dbReference>
<dbReference type="RefSeq" id="NP_439369.1">
    <property type="nucleotide sequence ID" value="NC_000907.1"/>
</dbReference>
<dbReference type="PDB" id="1T3B">
    <property type="method" value="X-ray"/>
    <property type="resolution" value="2.50 A"/>
    <property type="chains" value="A=19-229"/>
</dbReference>
<dbReference type="PDBsum" id="1T3B"/>
<dbReference type="SMR" id="P45111"/>
<dbReference type="STRING" id="71421.HI_1213"/>
<dbReference type="EnsemblBacteria" id="AAC22866">
    <property type="protein sequence ID" value="AAC22866"/>
    <property type="gene ID" value="HI_1213"/>
</dbReference>
<dbReference type="KEGG" id="hin:HI_1213"/>
<dbReference type="PATRIC" id="fig|71421.8.peg.1265"/>
<dbReference type="eggNOG" id="COG1651">
    <property type="taxonomic scope" value="Bacteria"/>
</dbReference>
<dbReference type="HOGENOM" id="CLU_083593_0_0_6"/>
<dbReference type="OrthoDB" id="12976at2"/>
<dbReference type="PhylomeDB" id="P45111"/>
<dbReference type="BioCyc" id="HINF71421:G1GJ1-1244-MONOMER"/>
<dbReference type="EvolutionaryTrace" id="P45111"/>
<dbReference type="Proteomes" id="UP000000579">
    <property type="component" value="Chromosome"/>
</dbReference>
<dbReference type="GO" id="GO:0042597">
    <property type="term" value="C:periplasmic space"/>
    <property type="evidence" value="ECO:0007669"/>
    <property type="project" value="UniProtKB-SubCell"/>
</dbReference>
<dbReference type="CDD" id="cd03020">
    <property type="entry name" value="DsbA_DsbC_DsbG"/>
    <property type="match status" value="1"/>
</dbReference>
<dbReference type="Gene3D" id="3.10.450.70">
    <property type="entry name" value="Disulphide bond isomerase, DsbC/G, N-terminal"/>
    <property type="match status" value="1"/>
</dbReference>
<dbReference type="Gene3D" id="3.40.30.10">
    <property type="entry name" value="Glutaredoxin"/>
    <property type="match status" value="1"/>
</dbReference>
<dbReference type="InterPro" id="IPR033954">
    <property type="entry name" value="DiS-bond_Isoase_DsbC/G"/>
</dbReference>
<dbReference type="InterPro" id="IPR018950">
    <property type="entry name" value="DiS-bond_isomerase_DsbC/G_N"/>
</dbReference>
<dbReference type="InterPro" id="IPR009094">
    <property type="entry name" value="DiS-bond_isomerase_DsbC/G_N_sf"/>
</dbReference>
<dbReference type="InterPro" id="IPR051470">
    <property type="entry name" value="Thiol:disulfide_interchange"/>
</dbReference>
<dbReference type="InterPro" id="IPR012336">
    <property type="entry name" value="Thioredoxin-like_fold"/>
</dbReference>
<dbReference type="InterPro" id="IPR036249">
    <property type="entry name" value="Thioredoxin-like_sf"/>
</dbReference>
<dbReference type="NCBIfam" id="NF008129">
    <property type="entry name" value="PRK10877.1"/>
    <property type="match status" value="1"/>
</dbReference>
<dbReference type="PANTHER" id="PTHR35272:SF3">
    <property type="entry name" value="THIOL:DISULFIDE INTERCHANGE PROTEIN DSBC"/>
    <property type="match status" value="1"/>
</dbReference>
<dbReference type="PANTHER" id="PTHR35272">
    <property type="entry name" value="THIOL:DISULFIDE INTERCHANGE PROTEIN DSBC-RELATED"/>
    <property type="match status" value="1"/>
</dbReference>
<dbReference type="Pfam" id="PF10411">
    <property type="entry name" value="DsbC_N"/>
    <property type="match status" value="1"/>
</dbReference>
<dbReference type="Pfam" id="PF13098">
    <property type="entry name" value="Thioredoxin_2"/>
    <property type="match status" value="1"/>
</dbReference>
<dbReference type="SUPFAM" id="SSF54423">
    <property type="entry name" value="DsbC/DsbG N-terminal domain-like"/>
    <property type="match status" value="1"/>
</dbReference>
<dbReference type="SUPFAM" id="SSF52833">
    <property type="entry name" value="Thioredoxin-like"/>
    <property type="match status" value="1"/>
</dbReference>
<feature type="signal peptide" evidence="1">
    <location>
        <begin position="1"/>
        <end position="18"/>
    </location>
</feature>
<feature type="chain" id="PRO_0000034276" description="Thiol:disulfide interchange protein DsbC">
    <location>
        <begin position="19"/>
        <end position="229"/>
    </location>
</feature>
<feature type="disulfide bond" description="Redox-active" evidence="2">
    <location>
        <begin position="116"/>
        <end position="119"/>
    </location>
</feature>
<feature type="turn" evidence="4">
    <location>
        <begin position="21"/>
        <end position="23"/>
    </location>
</feature>
<feature type="helix" evidence="4">
    <location>
        <begin position="24"/>
        <end position="28"/>
    </location>
</feature>
<feature type="turn" evidence="4">
    <location>
        <begin position="29"/>
        <end position="31"/>
    </location>
</feature>
<feature type="strand" evidence="4">
    <location>
        <begin position="56"/>
        <end position="62"/>
    </location>
</feature>
<feature type="turn" evidence="4">
    <location>
        <begin position="73"/>
        <end position="75"/>
    </location>
</feature>
<feature type="helix" evidence="4">
    <location>
        <begin position="81"/>
        <end position="90"/>
    </location>
</feature>
<feature type="helix" evidence="4">
    <location>
        <begin position="91"/>
        <end position="95"/>
    </location>
</feature>
<feature type="strand" evidence="4">
    <location>
        <begin position="96"/>
        <end position="99"/>
    </location>
</feature>
<feature type="strand" evidence="4">
    <location>
        <begin position="105"/>
        <end position="112"/>
    </location>
</feature>
<feature type="helix" evidence="4">
    <location>
        <begin position="117"/>
        <end position="123"/>
    </location>
</feature>
<feature type="helix" evidence="4">
    <location>
        <begin position="126"/>
        <end position="131"/>
    </location>
</feature>
<feature type="strand" evidence="4">
    <location>
        <begin position="134"/>
        <end position="140"/>
    </location>
</feature>
<feature type="helix" evidence="4">
    <location>
        <begin position="149"/>
        <end position="159"/>
    </location>
</feature>
<feature type="strand" evidence="4">
    <location>
        <begin position="160"/>
        <end position="162"/>
    </location>
</feature>
<feature type="helix" evidence="4">
    <location>
        <begin position="163"/>
        <end position="171"/>
    </location>
</feature>
<feature type="helix" evidence="4">
    <location>
        <begin position="184"/>
        <end position="195"/>
    </location>
</feature>
<feature type="strand" evidence="4">
    <location>
        <begin position="202"/>
        <end position="204"/>
    </location>
</feature>
<feature type="helix" evidence="4">
    <location>
        <begin position="217"/>
        <end position="226"/>
    </location>
</feature>
<protein>
    <recommendedName>
        <fullName>Thiol:disulfide interchange protein DsbC</fullName>
    </recommendedName>
</protein>
<organism>
    <name type="scientific">Haemophilus influenzae (strain ATCC 51907 / DSM 11121 / KW20 / Rd)</name>
    <dbReference type="NCBI Taxonomy" id="71421"/>
    <lineage>
        <taxon>Bacteria</taxon>
        <taxon>Pseudomonadati</taxon>
        <taxon>Pseudomonadota</taxon>
        <taxon>Gammaproteobacteria</taxon>
        <taxon>Pasteurellales</taxon>
        <taxon>Pasteurellaceae</taxon>
        <taxon>Haemophilus</taxon>
    </lineage>
</organism>
<accession>P45111</accession>
<evidence type="ECO:0000250" key="1"/>
<evidence type="ECO:0000269" key="2">
    <source>
    </source>
</evidence>
<evidence type="ECO:0000305" key="3"/>
<evidence type="ECO:0007829" key="4">
    <source>
        <dbReference type="PDB" id="1T3B"/>
    </source>
</evidence>
<keyword id="KW-0002">3D-structure</keyword>
<keyword id="KW-1015">Disulfide bond</keyword>
<keyword id="KW-0574">Periplasm</keyword>
<keyword id="KW-0676">Redox-active center</keyword>
<keyword id="KW-1185">Reference proteome</keyword>
<keyword id="KW-0732">Signal</keyword>
<sequence>MKKIFTALLCVAAANAMADDAAIKRKLQSFNISNIVIKSSPISGIKTAVTDQGILYVSEDGKYLFEGKLYELTNNGPVDVAGKILVDKLNSYKDEMIVYPAKNEKHVVTVFMDITCHYCHLLHQQLKEYNDLGITVRYLAFPRAGMNNQTAKQMEAIWTAKDPVFALNEAEKGNLPKEVKTPNIVKKHYELGIQFGVRGTPSIVTSTGELIGGYLKPADLLRALEETAQ</sequence>
<gene>
    <name type="primary">dsbC</name>
    <name type="synonym">xprA</name>
    <name type="ordered locus">HI_1213</name>
</gene>
<comment type="function">
    <text evidence="1">Required for disulfide bond formation in some periplasmic proteins. Acts by transferring its disulfide bond to other proteins and is reduced in the process. DsbC is reoxidized by a yet uncharacterized protein. Also acts as a disulfide isomerase (By similarity).</text>
</comment>
<comment type="subunit">
    <text evidence="2">Homodimer.</text>
</comment>
<comment type="subcellular location">
    <subcellularLocation>
        <location evidence="1">Periplasm</location>
    </subcellularLocation>
</comment>
<comment type="similarity">
    <text evidence="3">Belongs to the thioredoxin family. DsbC subfamily.</text>
</comment>